<name>FAXC_DROME</name>
<evidence type="ECO:0000256" key="1">
    <source>
        <dbReference type="SAM" id="MobiDB-lite"/>
    </source>
</evidence>
<evidence type="ECO:0000269" key="2">
    <source>
    </source>
</evidence>
<evidence type="ECO:0000305" key="3"/>
<keyword id="KW-0217">Developmental protein</keyword>
<keyword id="KW-1185">Reference proteome</keyword>
<protein>
    <recommendedName>
        <fullName>Failed axon connections</fullName>
    </recommendedName>
</protein>
<proteinExistence type="evidence at protein level"/>
<accession>Q95RI5</accession>
<accession>Q9VV57</accession>
<organism>
    <name type="scientific">Drosophila melanogaster</name>
    <name type="common">Fruit fly</name>
    <dbReference type="NCBI Taxonomy" id="7227"/>
    <lineage>
        <taxon>Eukaryota</taxon>
        <taxon>Metazoa</taxon>
        <taxon>Ecdysozoa</taxon>
        <taxon>Arthropoda</taxon>
        <taxon>Hexapoda</taxon>
        <taxon>Insecta</taxon>
        <taxon>Pterygota</taxon>
        <taxon>Neoptera</taxon>
        <taxon>Endopterygota</taxon>
        <taxon>Diptera</taxon>
        <taxon>Brachycera</taxon>
        <taxon>Muscomorpha</taxon>
        <taxon>Ephydroidea</taxon>
        <taxon>Drosophilidae</taxon>
        <taxon>Drosophila</taxon>
        <taxon>Sophophora</taxon>
    </lineage>
</organism>
<sequence>MASEVAQIPAEETPAVAAAEKSEEPEKSAAPPADSAAAPAAAPAVEKAEDADGEKKDGEAGKQDKQQDGEEPKKDEAVAAPVATKSEAPPAQKFNVHKTNFEKDIIYLYQFSRTPLLPSLSPYCLKVETWLRLVGLKYENVDHKMRFRSKKGQLPFIELNGEEIADSAIIIKELSSKYEKYLDSGLTAEQRNVSYATIAMLENHLIWIIFYWRAKYPDNVLKGYKVNLQHALGLRLPNSILNFFFKITFGRKWFQGTKKLKAHGIGVHSAEEIEEFGKDDLKVLSEMLDCKPFFFGDEPTTLDVVAFAVLSQLHYLSKDIAYPLRDYMTEKCPNLIGHVSRMKDKCFPDWDEICTKLDLNAHIPKPEPETKEGKEGGEQEKSNEQEGTEGDKIEKELEKDKSNEKESTEENKEKEETK</sequence>
<dbReference type="EMBL" id="AY061352">
    <property type="protein sequence ID" value="AAL28900.1"/>
    <property type="molecule type" value="mRNA"/>
</dbReference>
<dbReference type="EMBL" id="AE014296">
    <property type="protein sequence ID" value="AAF49465.2"/>
    <property type="molecule type" value="Genomic_DNA"/>
</dbReference>
<dbReference type="PIR" id="S58776">
    <property type="entry name" value="S58776"/>
</dbReference>
<dbReference type="RefSeq" id="NP_524106.3">
    <property type="nucleotide sequence ID" value="NM_079382.7"/>
</dbReference>
<dbReference type="BioGRID" id="65132">
    <property type="interactions" value="103"/>
</dbReference>
<dbReference type="DIP" id="DIP-18589N"/>
<dbReference type="FunCoup" id="Q95RI5">
    <property type="interactions" value="753"/>
</dbReference>
<dbReference type="IntAct" id="Q95RI5">
    <property type="interactions" value="168"/>
</dbReference>
<dbReference type="STRING" id="7227.FBpp0075170"/>
<dbReference type="PaxDb" id="7227-FBpp0075170"/>
<dbReference type="DNASU" id="39826"/>
<dbReference type="EnsemblMetazoa" id="FBtr0075412">
    <property type="protein sequence ID" value="FBpp0075170"/>
    <property type="gene ID" value="FBgn0014163"/>
</dbReference>
<dbReference type="GeneID" id="39826"/>
<dbReference type="KEGG" id="dme:Dmel_CG4609"/>
<dbReference type="UCSC" id="CG4609-RA">
    <property type="organism name" value="d. melanogaster"/>
</dbReference>
<dbReference type="AGR" id="FB:FBgn0014163"/>
<dbReference type="CTD" id="39826"/>
<dbReference type="FlyBase" id="FBgn0014163">
    <property type="gene designation" value="fax"/>
</dbReference>
<dbReference type="VEuPathDB" id="VectorBase:FBgn0014163"/>
<dbReference type="eggNOG" id="KOG4244">
    <property type="taxonomic scope" value="Eukaryota"/>
</dbReference>
<dbReference type="GeneTree" id="ENSGT00950000182919"/>
<dbReference type="HOGENOM" id="CLU_044137_0_0_1"/>
<dbReference type="InParanoid" id="Q95RI5"/>
<dbReference type="OMA" id="CFPDWED"/>
<dbReference type="OrthoDB" id="5809458at2759"/>
<dbReference type="PhylomeDB" id="Q95RI5"/>
<dbReference type="SignaLink" id="Q95RI5"/>
<dbReference type="BioGRID-ORCS" id="39826">
    <property type="hits" value="0 hits in 1 CRISPR screen"/>
</dbReference>
<dbReference type="ChiTaRS" id="fax">
    <property type="organism name" value="fly"/>
</dbReference>
<dbReference type="GenomeRNAi" id="39826"/>
<dbReference type="PRO" id="PR:Q95RI5"/>
<dbReference type="Proteomes" id="UP000000803">
    <property type="component" value="Chromosome 3L"/>
</dbReference>
<dbReference type="Bgee" id="FBgn0014163">
    <property type="expression patterns" value="Expressed in hemocyte (sensu Nematoda and Protostomia) in arthropod fat body and 273 other cell types or tissues"/>
</dbReference>
<dbReference type="ExpressionAtlas" id="Q95RI5">
    <property type="expression patterns" value="baseline and differential"/>
</dbReference>
<dbReference type="GO" id="GO:0005737">
    <property type="term" value="C:cytoplasm"/>
    <property type="evidence" value="ECO:0007005"/>
    <property type="project" value="FlyBase"/>
</dbReference>
<dbReference type="GO" id="GO:0005886">
    <property type="term" value="C:plasma membrane"/>
    <property type="evidence" value="ECO:0007005"/>
    <property type="project" value="FlyBase"/>
</dbReference>
<dbReference type="GO" id="GO:0007409">
    <property type="term" value="P:axonogenesis"/>
    <property type="evidence" value="ECO:0000316"/>
    <property type="project" value="FlyBase"/>
</dbReference>
<dbReference type="GO" id="GO:0036099">
    <property type="term" value="P:female germ-line stem cell population maintenance"/>
    <property type="evidence" value="ECO:0000315"/>
    <property type="project" value="FlyBase"/>
</dbReference>
<dbReference type="CDD" id="cd03193">
    <property type="entry name" value="GST_C_Metaxin"/>
    <property type="match status" value="1"/>
</dbReference>
<dbReference type="CDD" id="cd03080">
    <property type="entry name" value="GST_N_Metaxin_like"/>
    <property type="match status" value="1"/>
</dbReference>
<dbReference type="FunFam" id="1.20.1050.10:FF:000043">
    <property type="entry name" value="Failed axon connections, isoform B"/>
    <property type="match status" value="1"/>
</dbReference>
<dbReference type="Gene3D" id="1.20.1050.10">
    <property type="match status" value="1"/>
</dbReference>
<dbReference type="Gene3D" id="3.40.30.10">
    <property type="entry name" value="Glutaredoxin"/>
    <property type="match status" value="1"/>
</dbReference>
<dbReference type="InterPro" id="IPR026928">
    <property type="entry name" value="FAX/IsoI-like"/>
</dbReference>
<dbReference type="InterPro" id="IPR036282">
    <property type="entry name" value="Glutathione-S-Trfase_C_sf"/>
</dbReference>
<dbReference type="InterPro" id="IPR040079">
    <property type="entry name" value="Glutathione_S-Trfase"/>
</dbReference>
<dbReference type="InterPro" id="IPR033468">
    <property type="entry name" value="Metaxin_GST"/>
</dbReference>
<dbReference type="InterPro" id="IPR050931">
    <property type="entry name" value="Mito_Protein_Transport_Metaxin"/>
</dbReference>
<dbReference type="InterPro" id="IPR012336">
    <property type="entry name" value="Thioredoxin-like_fold"/>
</dbReference>
<dbReference type="InterPro" id="IPR036249">
    <property type="entry name" value="Thioredoxin-like_sf"/>
</dbReference>
<dbReference type="PANTHER" id="PTHR12289:SF41">
    <property type="entry name" value="FAILED AXON CONNECTIONS-RELATED"/>
    <property type="match status" value="1"/>
</dbReference>
<dbReference type="PANTHER" id="PTHR12289">
    <property type="entry name" value="METAXIN RELATED"/>
    <property type="match status" value="1"/>
</dbReference>
<dbReference type="Pfam" id="PF17171">
    <property type="entry name" value="GST_C_6"/>
    <property type="match status" value="1"/>
</dbReference>
<dbReference type="Pfam" id="PF17172">
    <property type="entry name" value="GST_N_4"/>
    <property type="match status" value="1"/>
</dbReference>
<dbReference type="SFLD" id="SFLDS00019">
    <property type="entry name" value="Glutathione_Transferase_(cytos"/>
    <property type="match status" value="1"/>
</dbReference>
<dbReference type="SFLD" id="SFLDG01200">
    <property type="entry name" value="SUF1.1"/>
    <property type="match status" value="1"/>
</dbReference>
<dbReference type="SUPFAM" id="SSF47616">
    <property type="entry name" value="GST C-terminal domain-like"/>
    <property type="match status" value="1"/>
</dbReference>
<dbReference type="SUPFAM" id="SSF52833">
    <property type="entry name" value="Thioredoxin-like"/>
    <property type="match status" value="1"/>
</dbReference>
<comment type="function">
    <text evidence="2">Together with Abl, involved in embryonic axonal development.</text>
</comment>
<comment type="interaction">
    <interactant intactId="EBI-147695">
        <id>Q95RI5</id>
    </interactant>
    <interactant intactId="EBI-3431623">
        <id>Q9U1K1-1</id>
        <label>spir</label>
    </interactant>
    <organismsDiffer>false</organismsDiffer>
    <experiments>2</experiments>
</comment>
<comment type="developmental stage">
    <text evidence="2">Not detected in pregastrula embryos. Upon gastrulation, detected in the epidermis and visceral mesoderm. The expression pattern undergoes a pronounced change, such that epidermal expression decreases to background levels while mesodermal expression remains high. Visceral mesoderm expression decreases once formation of the gut tube is complete. Concurrently, central nervous system expression intensifies. Also detected in the peripheral nervous system.</text>
</comment>
<comment type="similarity">
    <text evidence="3">Belongs to the FAX family.</text>
</comment>
<feature type="chain" id="PRO_0000417446" description="Failed axon connections">
    <location>
        <begin position="1"/>
        <end position="418"/>
    </location>
</feature>
<feature type="region of interest" description="Disordered" evidence="1">
    <location>
        <begin position="1"/>
        <end position="95"/>
    </location>
</feature>
<feature type="region of interest" description="Disordered" evidence="1">
    <location>
        <begin position="361"/>
        <end position="418"/>
    </location>
</feature>
<feature type="compositionally biased region" description="Low complexity" evidence="1">
    <location>
        <begin position="9"/>
        <end position="19"/>
    </location>
</feature>
<feature type="compositionally biased region" description="Low complexity" evidence="1">
    <location>
        <begin position="28"/>
        <end position="45"/>
    </location>
</feature>
<feature type="compositionally biased region" description="Basic and acidic residues" evidence="1">
    <location>
        <begin position="46"/>
        <end position="77"/>
    </location>
</feature>
<feature type="compositionally biased region" description="Basic and acidic residues" evidence="1">
    <location>
        <begin position="364"/>
        <end position="418"/>
    </location>
</feature>
<gene>
    <name type="primary">fax</name>
    <name type="ORF">CG4609</name>
</gene>
<reference key="1">
    <citation type="journal article" date="1995" name="Genetics">
        <title>Genetic interactions between the Drosophila Abelson (Abl) tyrosine kinase and failed axon connections (fax), a novel protein in axon bundles.</title>
        <authorList>
            <person name="Hill K.K."/>
            <person name="Bedian V."/>
            <person name="Juang J.L."/>
            <person name="Hoffmann F.M."/>
        </authorList>
    </citation>
    <scope>NUCLEOTIDE SEQUENCE [MRNA]</scope>
    <scope>FUNCTION</scope>
    <scope>DEVELOPMENTAL STAGE</scope>
</reference>
<reference key="2">
    <citation type="journal article" date="2002" name="Genome Biol.">
        <title>A Drosophila full-length cDNA resource.</title>
        <authorList>
            <person name="Stapleton M."/>
            <person name="Carlson J.W."/>
            <person name="Brokstein P."/>
            <person name="Yu C."/>
            <person name="Champe M."/>
            <person name="George R.A."/>
            <person name="Guarin H."/>
            <person name="Kronmiller B."/>
            <person name="Pacleb J.M."/>
            <person name="Park S."/>
            <person name="Wan K.H."/>
            <person name="Rubin G.M."/>
            <person name="Celniker S.E."/>
        </authorList>
    </citation>
    <scope>NUCLEOTIDE SEQUENCE [LARGE SCALE MRNA]</scope>
    <source>
        <strain>Berkeley</strain>
        <tissue>Embryo</tissue>
    </source>
</reference>
<reference key="3">
    <citation type="journal article" date="2000" name="Science">
        <title>The genome sequence of Drosophila melanogaster.</title>
        <authorList>
            <person name="Adams M.D."/>
            <person name="Celniker S.E."/>
            <person name="Holt R.A."/>
            <person name="Evans C.A."/>
            <person name="Gocayne J.D."/>
            <person name="Amanatides P.G."/>
            <person name="Scherer S.E."/>
            <person name="Li P.W."/>
            <person name="Hoskins R.A."/>
            <person name="Galle R.F."/>
            <person name="George R.A."/>
            <person name="Lewis S.E."/>
            <person name="Richards S."/>
            <person name="Ashburner M."/>
            <person name="Henderson S.N."/>
            <person name="Sutton G.G."/>
            <person name="Wortman J.R."/>
            <person name="Yandell M.D."/>
            <person name="Zhang Q."/>
            <person name="Chen L.X."/>
            <person name="Brandon R.C."/>
            <person name="Rogers Y.-H.C."/>
            <person name="Blazej R.G."/>
            <person name="Champe M."/>
            <person name="Pfeiffer B.D."/>
            <person name="Wan K.H."/>
            <person name="Doyle C."/>
            <person name="Baxter E.G."/>
            <person name="Helt G."/>
            <person name="Nelson C.R."/>
            <person name="Miklos G.L.G."/>
            <person name="Abril J.F."/>
            <person name="Agbayani A."/>
            <person name="An H.-J."/>
            <person name="Andrews-Pfannkoch C."/>
            <person name="Baldwin D."/>
            <person name="Ballew R.M."/>
            <person name="Basu A."/>
            <person name="Baxendale J."/>
            <person name="Bayraktaroglu L."/>
            <person name="Beasley E.M."/>
            <person name="Beeson K.Y."/>
            <person name="Benos P.V."/>
            <person name="Berman B.P."/>
            <person name="Bhandari D."/>
            <person name="Bolshakov S."/>
            <person name="Borkova D."/>
            <person name="Botchan M.R."/>
            <person name="Bouck J."/>
            <person name="Brokstein P."/>
            <person name="Brottier P."/>
            <person name="Burtis K.C."/>
            <person name="Busam D.A."/>
            <person name="Butler H."/>
            <person name="Cadieu E."/>
            <person name="Center A."/>
            <person name="Chandra I."/>
            <person name="Cherry J.M."/>
            <person name="Cawley S."/>
            <person name="Dahlke C."/>
            <person name="Davenport L.B."/>
            <person name="Davies P."/>
            <person name="de Pablos B."/>
            <person name="Delcher A."/>
            <person name="Deng Z."/>
            <person name="Mays A.D."/>
            <person name="Dew I."/>
            <person name="Dietz S.M."/>
            <person name="Dodson K."/>
            <person name="Doup L.E."/>
            <person name="Downes M."/>
            <person name="Dugan-Rocha S."/>
            <person name="Dunkov B.C."/>
            <person name="Dunn P."/>
            <person name="Durbin K.J."/>
            <person name="Evangelista C.C."/>
            <person name="Ferraz C."/>
            <person name="Ferriera S."/>
            <person name="Fleischmann W."/>
            <person name="Fosler C."/>
            <person name="Gabrielian A.E."/>
            <person name="Garg N.S."/>
            <person name="Gelbart W.M."/>
            <person name="Glasser K."/>
            <person name="Glodek A."/>
            <person name="Gong F."/>
            <person name="Gorrell J.H."/>
            <person name="Gu Z."/>
            <person name="Guan P."/>
            <person name="Harris M."/>
            <person name="Harris N.L."/>
            <person name="Harvey D.A."/>
            <person name="Heiman T.J."/>
            <person name="Hernandez J.R."/>
            <person name="Houck J."/>
            <person name="Hostin D."/>
            <person name="Houston K.A."/>
            <person name="Howland T.J."/>
            <person name="Wei M.-H."/>
            <person name="Ibegwam C."/>
            <person name="Jalali M."/>
            <person name="Kalush F."/>
            <person name="Karpen G.H."/>
            <person name="Ke Z."/>
            <person name="Kennison J.A."/>
            <person name="Ketchum K.A."/>
            <person name="Kimmel B.E."/>
            <person name="Kodira C.D."/>
            <person name="Kraft C.L."/>
            <person name="Kravitz S."/>
            <person name="Kulp D."/>
            <person name="Lai Z."/>
            <person name="Lasko P."/>
            <person name="Lei Y."/>
            <person name="Levitsky A.A."/>
            <person name="Li J.H."/>
            <person name="Li Z."/>
            <person name="Liang Y."/>
            <person name="Lin X."/>
            <person name="Liu X."/>
            <person name="Mattei B."/>
            <person name="McIntosh T.C."/>
            <person name="McLeod M.P."/>
            <person name="McPherson D."/>
            <person name="Merkulov G."/>
            <person name="Milshina N.V."/>
            <person name="Mobarry C."/>
            <person name="Morris J."/>
            <person name="Moshrefi A."/>
            <person name="Mount S.M."/>
            <person name="Moy M."/>
            <person name="Murphy B."/>
            <person name="Murphy L."/>
            <person name="Muzny D.M."/>
            <person name="Nelson D.L."/>
            <person name="Nelson D.R."/>
            <person name="Nelson K.A."/>
            <person name="Nixon K."/>
            <person name="Nusskern D.R."/>
            <person name="Pacleb J.M."/>
            <person name="Palazzolo M."/>
            <person name="Pittman G.S."/>
            <person name="Pan S."/>
            <person name="Pollard J."/>
            <person name="Puri V."/>
            <person name="Reese M.G."/>
            <person name="Reinert K."/>
            <person name="Remington K."/>
            <person name="Saunders R.D.C."/>
            <person name="Scheeler F."/>
            <person name="Shen H."/>
            <person name="Shue B.C."/>
            <person name="Siden-Kiamos I."/>
            <person name="Simpson M."/>
            <person name="Skupski M.P."/>
            <person name="Smith T.J."/>
            <person name="Spier E."/>
            <person name="Spradling A.C."/>
            <person name="Stapleton M."/>
            <person name="Strong R."/>
            <person name="Sun E."/>
            <person name="Svirskas R."/>
            <person name="Tector C."/>
            <person name="Turner R."/>
            <person name="Venter E."/>
            <person name="Wang A.H."/>
            <person name="Wang X."/>
            <person name="Wang Z.-Y."/>
            <person name="Wassarman D.A."/>
            <person name="Weinstock G.M."/>
            <person name="Weissenbach J."/>
            <person name="Williams S.M."/>
            <person name="Woodage T."/>
            <person name="Worley K.C."/>
            <person name="Wu D."/>
            <person name="Yang S."/>
            <person name="Yao Q.A."/>
            <person name="Ye J."/>
            <person name="Yeh R.-F."/>
            <person name="Zaveri J.S."/>
            <person name="Zhan M."/>
            <person name="Zhang G."/>
            <person name="Zhao Q."/>
            <person name="Zheng L."/>
            <person name="Zheng X.H."/>
            <person name="Zhong F.N."/>
            <person name="Zhong W."/>
            <person name="Zhou X."/>
            <person name="Zhu S.C."/>
            <person name="Zhu X."/>
            <person name="Smith H.O."/>
            <person name="Gibbs R.A."/>
            <person name="Myers E.W."/>
            <person name="Rubin G.M."/>
            <person name="Venter J.C."/>
        </authorList>
    </citation>
    <scope>NUCLEOTIDE SEQUENCE [LARGE SCALE GENOMIC DNA]</scope>
    <source>
        <strain>Berkeley</strain>
    </source>
</reference>
<reference key="4">
    <citation type="journal article" date="2002" name="Genome Biol.">
        <title>Annotation of the Drosophila melanogaster euchromatic genome: a systematic review.</title>
        <authorList>
            <person name="Misra S."/>
            <person name="Crosby M.A."/>
            <person name="Mungall C.J."/>
            <person name="Matthews B.B."/>
            <person name="Campbell K.S."/>
            <person name="Hradecky P."/>
            <person name="Huang Y."/>
            <person name="Kaminker J.S."/>
            <person name="Millburn G.H."/>
            <person name="Prochnik S.E."/>
            <person name="Smith C.D."/>
            <person name="Tupy J.L."/>
            <person name="Whitfield E.J."/>
            <person name="Bayraktaroglu L."/>
            <person name="Berman B.P."/>
            <person name="Bettencourt B.R."/>
            <person name="Celniker S.E."/>
            <person name="de Grey A.D.N.J."/>
            <person name="Drysdale R.A."/>
            <person name="Harris N.L."/>
            <person name="Richter J."/>
            <person name="Russo S."/>
            <person name="Schroeder A.J."/>
            <person name="Shu S.Q."/>
            <person name="Stapleton M."/>
            <person name="Yamada C."/>
            <person name="Ashburner M."/>
            <person name="Gelbart W.M."/>
            <person name="Rubin G.M."/>
            <person name="Lewis S.E."/>
        </authorList>
    </citation>
    <scope>GENOME REANNOTATION</scope>
    <source>
        <strain>Berkeley</strain>
    </source>
</reference>